<reference key="1">
    <citation type="submission" date="2007-08" db="EMBL/GenBank/DDBJ databases">
        <title>Complete sequence of Shewanella sediminis HAW-EB3.</title>
        <authorList>
            <consortium name="US DOE Joint Genome Institute"/>
            <person name="Copeland A."/>
            <person name="Lucas S."/>
            <person name="Lapidus A."/>
            <person name="Barry K."/>
            <person name="Glavina del Rio T."/>
            <person name="Dalin E."/>
            <person name="Tice H."/>
            <person name="Pitluck S."/>
            <person name="Chertkov O."/>
            <person name="Brettin T."/>
            <person name="Bruce D."/>
            <person name="Detter J.C."/>
            <person name="Han C."/>
            <person name="Schmutz J."/>
            <person name="Larimer F."/>
            <person name="Land M."/>
            <person name="Hauser L."/>
            <person name="Kyrpides N."/>
            <person name="Kim E."/>
            <person name="Zhao J.-S."/>
            <person name="Richardson P."/>
        </authorList>
    </citation>
    <scope>NUCLEOTIDE SEQUENCE [LARGE SCALE GENOMIC DNA]</scope>
    <source>
        <strain>HAW-EB3</strain>
    </source>
</reference>
<comment type="function">
    <text evidence="1">This protein binds to the 23S rRNA, and is important in its secondary structure. It is located near the subunit interface in the base of the L7/L12 stalk, and near the tRNA binding site of the peptidyltransferase center.</text>
</comment>
<comment type="subunit">
    <text evidence="1">Part of the 50S ribosomal subunit.</text>
</comment>
<comment type="similarity">
    <text evidence="1">Belongs to the universal ribosomal protein uL6 family.</text>
</comment>
<organism>
    <name type="scientific">Shewanella sediminis (strain HAW-EB3)</name>
    <dbReference type="NCBI Taxonomy" id="425104"/>
    <lineage>
        <taxon>Bacteria</taxon>
        <taxon>Pseudomonadati</taxon>
        <taxon>Pseudomonadota</taxon>
        <taxon>Gammaproteobacteria</taxon>
        <taxon>Alteromonadales</taxon>
        <taxon>Shewanellaceae</taxon>
        <taxon>Shewanella</taxon>
    </lineage>
</organism>
<protein>
    <recommendedName>
        <fullName evidence="1">Large ribosomal subunit protein uL6</fullName>
    </recommendedName>
    <alternativeName>
        <fullName evidence="2">50S ribosomal protein L6</fullName>
    </alternativeName>
</protein>
<accession>A8G1D3</accession>
<dbReference type="EMBL" id="CP000821">
    <property type="protein sequence ID" value="ABV38906.1"/>
    <property type="molecule type" value="Genomic_DNA"/>
</dbReference>
<dbReference type="RefSeq" id="WP_012144635.1">
    <property type="nucleotide sequence ID" value="NC_009831.1"/>
</dbReference>
<dbReference type="SMR" id="A8G1D3"/>
<dbReference type="STRING" id="425104.Ssed_4302"/>
<dbReference type="KEGG" id="sse:Ssed_4302"/>
<dbReference type="eggNOG" id="COG0097">
    <property type="taxonomic scope" value="Bacteria"/>
</dbReference>
<dbReference type="HOGENOM" id="CLU_065464_1_2_6"/>
<dbReference type="OrthoDB" id="9805007at2"/>
<dbReference type="Proteomes" id="UP000002015">
    <property type="component" value="Chromosome"/>
</dbReference>
<dbReference type="GO" id="GO:0022625">
    <property type="term" value="C:cytosolic large ribosomal subunit"/>
    <property type="evidence" value="ECO:0007669"/>
    <property type="project" value="TreeGrafter"/>
</dbReference>
<dbReference type="GO" id="GO:0019843">
    <property type="term" value="F:rRNA binding"/>
    <property type="evidence" value="ECO:0007669"/>
    <property type="project" value="UniProtKB-UniRule"/>
</dbReference>
<dbReference type="GO" id="GO:0003735">
    <property type="term" value="F:structural constituent of ribosome"/>
    <property type="evidence" value="ECO:0007669"/>
    <property type="project" value="InterPro"/>
</dbReference>
<dbReference type="GO" id="GO:0002181">
    <property type="term" value="P:cytoplasmic translation"/>
    <property type="evidence" value="ECO:0007669"/>
    <property type="project" value="TreeGrafter"/>
</dbReference>
<dbReference type="FunFam" id="3.90.930.12:FF:000001">
    <property type="entry name" value="50S ribosomal protein L6"/>
    <property type="match status" value="1"/>
</dbReference>
<dbReference type="FunFam" id="3.90.930.12:FF:000002">
    <property type="entry name" value="50S ribosomal protein L6"/>
    <property type="match status" value="1"/>
</dbReference>
<dbReference type="Gene3D" id="3.90.930.12">
    <property type="entry name" value="Ribosomal protein L6, alpha-beta domain"/>
    <property type="match status" value="2"/>
</dbReference>
<dbReference type="HAMAP" id="MF_01365_B">
    <property type="entry name" value="Ribosomal_uL6_B"/>
    <property type="match status" value="1"/>
</dbReference>
<dbReference type="InterPro" id="IPR000702">
    <property type="entry name" value="Ribosomal_uL6-like"/>
</dbReference>
<dbReference type="InterPro" id="IPR036789">
    <property type="entry name" value="Ribosomal_uL6-like_a/b-dom_sf"/>
</dbReference>
<dbReference type="InterPro" id="IPR020040">
    <property type="entry name" value="Ribosomal_uL6_a/b-dom"/>
</dbReference>
<dbReference type="InterPro" id="IPR019906">
    <property type="entry name" value="Ribosomal_uL6_bac-type"/>
</dbReference>
<dbReference type="InterPro" id="IPR002358">
    <property type="entry name" value="Ribosomal_uL6_CS"/>
</dbReference>
<dbReference type="NCBIfam" id="TIGR03654">
    <property type="entry name" value="L6_bact"/>
    <property type="match status" value="1"/>
</dbReference>
<dbReference type="PANTHER" id="PTHR11655">
    <property type="entry name" value="60S/50S RIBOSOMAL PROTEIN L6/L9"/>
    <property type="match status" value="1"/>
</dbReference>
<dbReference type="PANTHER" id="PTHR11655:SF14">
    <property type="entry name" value="LARGE RIBOSOMAL SUBUNIT PROTEIN UL6M"/>
    <property type="match status" value="1"/>
</dbReference>
<dbReference type="Pfam" id="PF00347">
    <property type="entry name" value="Ribosomal_L6"/>
    <property type="match status" value="2"/>
</dbReference>
<dbReference type="PIRSF" id="PIRSF002162">
    <property type="entry name" value="Ribosomal_L6"/>
    <property type="match status" value="1"/>
</dbReference>
<dbReference type="PRINTS" id="PR00059">
    <property type="entry name" value="RIBOSOMALL6"/>
</dbReference>
<dbReference type="SUPFAM" id="SSF56053">
    <property type="entry name" value="Ribosomal protein L6"/>
    <property type="match status" value="2"/>
</dbReference>
<dbReference type="PROSITE" id="PS00525">
    <property type="entry name" value="RIBOSOMAL_L6_1"/>
    <property type="match status" value="1"/>
</dbReference>
<keyword id="KW-1185">Reference proteome</keyword>
<keyword id="KW-0687">Ribonucleoprotein</keyword>
<keyword id="KW-0689">Ribosomal protein</keyword>
<keyword id="KW-0694">RNA-binding</keyword>
<keyword id="KW-0699">rRNA-binding</keyword>
<feature type="chain" id="PRO_1000087067" description="Large ribosomal subunit protein uL6">
    <location>
        <begin position="1"/>
        <end position="176"/>
    </location>
</feature>
<proteinExistence type="inferred from homology"/>
<sequence>MSRVAKAPVAIPAGVEVTLNEQTITVKGTKGSLTRVINADVSVVVENNEIKCSSVEGVKTNAQAGTARALINNMVVGVTAGFEKKLQLIGVGYRAKIAGKGVDLTLGFSHPLVHELPDGVTAVCPSQTEIVLSGTDKQLVGQVAAEIRGYRPPEPYKGKGVRYADEQVRRKEAKKK</sequence>
<evidence type="ECO:0000255" key="1">
    <source>
        <dbReference type="HAMAP-Rule" id="MF_01365"/>
    </source>
</evidence>
<evidence type="ECO:0000305" key="2"/>
<name>RL6_SHESH</name>
<gene>
    <name evidence="1" type="primary">rplF</name>
    <name type="ordered locus">Ssed_4302</name>
</gene>